<evidence type="ECO:0000255" key="1">
    <source>
        <dbReference type="HAMAP-Rule" id="MF_01393"/>
    </source>
</evidence>
<feature type="chain" id="PRO_1000215152" description="ATP synthase subunit a">
    <location>
        <begin position="1"/>
        <end position="242"/>
    </location>
</feature>
<feature type="transmembrane region" description="Helical" evidence="1">
    <location>
        <begin position="29"/>
        <end position="49"/>
    </location>
</feature>
<feature type="transmembrane region" description="Helical" evidence="1">
    <location>
        <begin position="84"/>
        <end position="104"/>
    </location>
</feature>
<feature type="transmembrane region" description="Helical" evidence="1">
    <location>
        <begin position="114"/>
        <end position="134"/>
    </location>
</feature>
<feature type="transmembrane region" description="Helical" evidence="1">
    <location>
        <begin position="140"/>
        <end position="160"/>
    </location>
</feature>
<feature type="transmembrane region" description="Helical" evidence="1">
    <location>
        <begin position="181"/>
        <end position="201"/>
    </location>
</feature>
<feature type="transmembrane region" description="Helical" evidence="1">
    <location>
        <begin position="203"/>
        <end position="223"/>
    </location>
</feature>
<comment type="function">
    <text evidence="1">Key component of the proton channel; it plays a direct role in the translocation of protons across the membrane.</text>
</comment>
<comment type="subunit">
    <text evidence="1">F-type ATPases have 2 components, CF(1) - the catalytic core - and CF(0) - the membrane proton channel. CF(1) has five subunits: alpha(3), beta(3), gamma(1), delta(1), epsilon(1). CF(0) has three main subunits: a(1), b(2) and c(9-12). The alpha and beta chains form an alternating ring which encloses part of the gamma chain. CF(1) is attached to CF(0) by a central stalk formed by the gamma and epsilon chains, while a peripheral stalk is formed by the delta and b chains.</text>
</comment>
<comment type="subcellular location">
    <subcellularLocation>
        <location evidence="1">Cell membrane</location>
        <topology evidence="1">Multi-pass membrane protein</topology>
    </subcellularLocation>
</comment>
<comment type="similarity">
    <text evidence="1">Belongs to the ATPase A chain family.</text>
</comment>
<gene>
    <name evidence="1" type="primary">atpB</name>
    <name type="ordered locus">RAF_ORF0025</name>
</gene>
<accession>C3PM51</accession>
<name>ATP6_RICAE</name>
<sequence length="242" mass="27452">MTHSPLAQFDIKKLIDIKMFGFDVSFTNSSIYMLLASILALTYFYLAFYNRKLVPSRLQVSAEIVYNLVADMLNQNIGVKGRKFIPLIFSLFIFILFCNLLGMTPYSFTTTSHIIVTFTLAILVFLMVTIVGFVKHGLRFLTLFLPHGTPLWLAPLMIVIELFTYLARPVSLSLRLAANMMAGHVLLKVIAGFTVSLMIYLKFLPIPIMVILIGFEIFVAILQAYIFTILSCMYLNDVINLH</sequence>
<keyword id="KW-0066">ATP synthesis</keyword>
<keyword id="KW-1003">Cell membrane</keyword>
<keyword id="KW-0138">CF(0)</keyword>
<keyword id="KW-0375">Hydrogen ion transport</keyword>
<keyword id="KW-0406">Ion transport</keyword>
<keyword id="KW-0472">Membrane</keyword>
<keyword id="KW-0812">Transmembrane</keyword>
<keyword id="KW-1133">Transmembrane helix</keyword>
<keyword id="KW-0813">Transport</keyword>
<reference key="1">
    <citation type="journal article" date="2009" name="BMC Genomics">
        <title>Analysis of the Rickettsia africae genome reveals that virulence acquisition in Rickettsia species may be explained by genome reduction.</title>
        <authorList>
            <person name="Fournier P.-E."/>
            <person name="El Karkouri K."/>
            <person name="Leroy Q."/>
            <person name="Robert C."/>
            <person name="Giumelli B."/>
            <person name="Renesto P."/>
            <person name="Socolovschi C."/>
            <person name="Parola P."/>
            <person name="Audic S."/>
            <person name="Raoult D."/>
        </authorList>
    </citation>
    <scope>NUCLEOTIDE SEQUENCE [LARGE SCALE GENOMIC DNA]</scope>
    <source>
        <strain>ESF-5</strain>
    </source>
</reference>
<protein>
    <recommendedName>
        <fullName evidence="1">ATP synthase subunit a</fullName>
    </recommendedName>
    <alternativeName>
        <fullName evidence="1">ATP synthase F0 sector subunit a</fullName>
    </alternativeName>
    <alternativeName>
        <fullName evidence="1">F-ATPase subunit 6</fullName>
    </alternativeName>
</protein>
<dbReference type="EMBL" id="CP001612">
    <property type="protein sequence ID" value="ACP53011.1"/>
    <property type="molecule type" value="Genomic_DNA"/>
</dbReference>
<dbReference type="RefSeq" id="WP_012719315.1">
    <property type="nucleotide sequence ID" value="NC_012633.1"/>
</dbReference>
<dbReference type="SMR" id="C3PM51"/>
<dbReference type="KEGG" id="raf:RAF_ORF0025"/>
<dbReference type="HOGENOM" id="CLU_041018_0_2_5"/>
<dbReference type="Proteomes" id="UP000002305">
    <property type="component" value="Chromosome"/>
</dbReference>
<dbReference type="GO" id="GO:0005886">
    <property type="term" value="C:plasma membrane"/>
    <property type="evidence" value="ECO:0007669"/>
    <property type="project" value="UniProtKB-SubCell"/>
</dbReference>
<dbReference type="GO" id="GO:0045259">
    <property type="term" value="C:proton-transporting ATP synthase complex"/>
    <property type="evidence" value="ECO:0007669"/>
    <property type="project" value="UniProtKB-KW"/>
</dbReference>
<dbReference type="GO" id="GO:0046933">
    <property type="term" value="F:proton-transporting ATP synthase activity, rotational mechanism"/>
    <property type="evidence" value="ECO:0007669"/>
    <property type="project" value="UniProtKB-UniRule"/>
</dbReference>
<dbReference type="CDD" id="cd00310">
    <property type="entry name" value="ATP-synt_Fo_a_6"/>
    <property type="match status" value="1"/>
</dbReference>
<dbReference type="FunFam" id="1.20.120.220:FF:000003">
    <property type="entry name" value="ATP synthase subunit a"/>
    <property type="match status" value="1"/>
</dbReference>
<dbReference type="Gene3D" id="1.20.120.220">
    <property type="entry name" value="ATP synthase, F0 complex, subunit A"/>
    <property type="match status" value="1"/>
</dbReference>
<dbReference type="HAMAP" id="MF_01393">
    <property type="entry name" value="ATP_synth_a_bact"/>
    <property type="match status" value="1"/>
</dbReference>
<dbReference type="InterPro" id="IPR000568">
    <property type="entry name" value="ATP_synth_F0_asu"/>
</dbReference>
<dbReference type="InterPro" id="IPR023011">
    <property type="entry name" value="ATP_synth_F0_asu_AS"/>
</dbReference>
<dbReference type="InterPro" id="IPR045083">
    <property type="entry name" value="ATP_synth_F0_asu_bact/mt"/>
</dbReference>
<dbReference type="InterPro" id="IPR035908">
    <property type="entry name" value="F0_ATP_A_sf"/>
</dbReference>
<dbReference type="NCBIfam" id="TIGR01131">
    <property type="entry name" value="ATP_synt_6_or_A"/>
    <property type="match status" value="1"/>
</dbReference>
<dbReference type="NCBIfam" id="NF004482">
    <property type="entry name" value="PRK05815.2-4"/>
    <property type="match status" value="1"/>
</dbReference>
<dbReference type="PANTHER" id="PTHR11410">
    <property type="entry name" value="ATP SYNTHASE SUBUNIT A"/>
    <property type="match status" value="1"/>
</dbReference>
<dbReference type="PANTHER" id="PTHR11410:SF0">
    <property type="entry name" value="ATP SYNTHASE SUBUNIT A"/>
    <property type="match status" value="1"/>
</dbReference>
<dbReference type="Pfam" id="PF00119">
    <property type="entry name" value="ATP-synt_A"/>
    <property type="match status" value="1"/>
</dbReference>
<dbReference type="PRINTS" id="PR00123">
    <property type="entry name" value="ATPASEA"/>
</dbReference>
<dbReference type="SUPFAM" id="SSF81336">
    <property type="entry name" value="F1F0 ATP synthase subunit A"/>
    <property type="match status" value="1"/>
</dbReference>
<dbReference type="PROSITE" id="PS00449">
    <property type="entry name" value="ATPASE_A"/>
    <property type="match status" value="1"/>
</dbReference>
<proteinExistence type="inferred from homology"/>
<organism>
    <name type="scientific">Rickettsia africae (strain ESF-5)</name>
    <dbReference type="NCBI Taxonomy" id="347255"/>
    <lineage>
        <taxon>Bacteria</taxon>
        <taxon>Pseudomonadati</taxon>
        <taxon>Pseudomonadota</taxon>
        <taxon>Alphaproteobacteria</taxon>
        <taxon>Rickettsiales</taxon>
        <taxon>Rickettsiaceae</taxon>
        <taxon>Rickettsieae</taxon>
        <taxon>Rickettsia</taxon>
        <taxon>spotted fever group</taxon>
    </lineage>
</organism>